<dbReference type="SMR" id="P0DTC0"/>
<dbReference type="GO" id="GO:0043657">
    <property type="term" value="C:host cell"/>
    <property type="evidence" value="ECO:0007669"/>
    <property type="project" value="GOC"/>
</dbReference>
<dbReference type="GO" id="GO:0042025">
    <property type="term" value="C:host cell nucleus"/>
    <property type="evidence" value="ECO:0007669"/>
    <property type="project" value="UniProtKB-SubCell"/>
</dbReference>
<dbReference type="GO" id="GO:0044423">
    <property type="term" value="C:virion component"/>
    <property type="evidence" value="ECO:0007669"/>
    <property type="project" value="UniProtKB-KW"/>
</dbReference>
<dbReference type="GO" id="GO:0003723">
    <property type="term" value="F:RNA binding"/>
    <property type="evidence" value="ECO:0007669"/>
    <property type="project" value="UniProtKB-KW"/>
</dbReference>
<dbReference type="GO" id="GO:0046718">
    <property type="term" value="P:symbiont entry into host cell"/>
    <property type="evidence" value="ECO:0007669"/>
    <property type="project" value="UniProtKB-KW"/>
</dbReference>
<dbReference type="GO" id="GO:0075732">
    <property type="term" value="P:viral penetration into host nucleus"/>
    <property type="evidence" value="ECO:0007669"/>
    <property type="project" value="UniProtKB-KW"/>
</dbReference>
<dbReference type="Gene3D" id="4.10.220.40">
    <property type="entry name" value="Delta antigen, N-terminal"/>
    <property type="match status" value="1"/>
</dbReference>
<dbReference type="InterPro" id="IPR027403">
    <property type="entry name" value="Delta_antigen_N"/>
</dbReference>
<dbReference type="InterPro" id="IPR037517">
    <property type="entry name" value="HDAG_dom"/>
</dbReference>
<dbReference type="InterPro" id="IPR002506">
    <property type="entry name" value="HDV_ag"/>
</dbReference>
<dbReference type="Pfam" id="PF01517">
    <property type="entry name" value="HDV_ag"/>
    <property type="match status" value="1"/>
</dbReference>
<dbReference type="SUPFAM" id="SSF58108">
    <property type="entry name" value="Oligomerization domain of hepatitis delta antigen"/>
    <property type="match status" value="1"/>
</dbReference>
<dbReference type="PROSITE" id="PS51838">
    <property type="entry name" value="HDAG"/>
    <property type="match status" value="1"/>
</dbReference>
<organismHost>
    <name type="scientific">Homo sapiens</name>
    <name type="common">Human</name>
    <dbReference type="NCBI Taxonomy" id="9606"/>
</organismHost>
<name>SHDAG_HDV27</name>
<reference key="1">
    <citation type="journal article" date="2018" name="PLoS Negl. Trop. Dis.">
        <title>Hepatitis B and hepatitis D virus infections in the Central African Republic, twenty-five years after a fulminant hepatitis outbreak, indicate continuing spread in asymptomatic young adults.</title>
        <authorList>
            <person name="Komas N.P."/>
            <person name="Ghosh S."/>
            <person name="Abdou-Chekaraou M."/>
            <person name="Pradat P."/>
            <person name="Al Hawajri N."/>
            <person name="Manirakiza A."/>
            <person name="Laghoe G.L."/>
            <person name="Bekondi C."/>
            <person name="Brichler S."/>
            <person name="Ouavene J.O."/>
            <person name="Sepou A."/>
            <person name="Yambiyo B.M."/>
            <person name="Gody J.C."/>
            <person name="Fikouma V."/>
            <person name="Gerber A."/>
            <person name="Abeywickrama Samarakoon N."/>
            <person name="Alfaiate D."/>
            <person name="Scholtes C."/>
            <person name="Martel N."/>
            <person name="Le Gal F."/>
            <person name="Lo Pinto H."/>
            <person name="Amri I."/>
            <person name="Hantz O."/>
            <person name="Durantel D."/>
            <person name="Lesbordes J.L."/>
            <person name="Gordien E."/>
            <person name="Merle P."/>
            <person name="Drugan T."/>
            <person name="Trepo C."/>
            <person name="Zoulim F."/>
            <person name="Cortay J.C."/>
            <person name="Kay A.C."/>
            <person name="Deny P."/>
        </authorList>
    </citation>
    <scope>NUCLEOTIDE SEQUENCE [GENOMIC RNA]</scope>
</reference>
<proteinExistence type="inferred from homology"/>
<evidence type="ECO:0000250" key="1">
    <source>
        <dbReference type="UniProtKB" id="P0C6L3"/>
    </source>
</evidence>
<evidence type="ECO:0000255" key="2"/>
<evidence type="ECO:0000255" key="3">
    <source>
        <dbReference type="PROSITE-ProRule" id="PRU01183"/>
    </source>
</evidence>
<evidence type="ECO:0000256" key="4">
    <source>
        <dbReference type="SAM" id="MobiDB-lite"/>
    </source>
</evidence>
<evidence type="ECO:0000305" key="5"/>
<accession>P0DTC0</accession>
<organism>
    <name type="scientific">Hepatitis delta virus genotype I (isolate HDV/Human/Central African Republic/FH27/1985)</name>
    <name type="common">HDV</name>
    <dbReference type="NCBI Taxonomy" id="2691025"/>
    <lineage>
        <taxon>Viruses</taxon>
        <taxon>Ribozyviria</taxon>
        <taxon>Kolmioviridae</taxon>
        <taxon>Deltavirus</taxon>
        <taxon>Hepatitis delta virus</taxon>
    </lineage>
</organism>
<feature type="chain" id="PRO_0000449503" description="Small delta antigen" evidence="1">
    <location>
        <begin position="1"/>
        <end position="195"/>
    </location>
</feature>
<feature type="domain" description="HDAg" evidence="3">
    <location>
        <begin position="20"/>
        <end position="195"/>
    </location>
</feature>
<feature type="region of interest" description="Disordered" evidence="4">
    <location>
        <begin position="1"/>
        <end position="195"/>
    </location>
</feature>
<feature type="region of interest" description="Dimerization" evidence="2">
    <location>
        <begin position="12"/>
        <end position="60"/>
    </location>
</feature>
<feature type="region of interest" description="RNAPII-binding" evidence="3">
    <location>
        <begin position="130"/>
        <end position="195"/>
    </location>
</feature>
<feature type="short sequence motif" description="Nuclear localization signal" evidence="1">
    <location>
        <begin position="66"/>
        <end position="75"/>
    </location>
</feature>
<feature type="compositionally biased region" description="Basic and acidic residues" evidence="4">
    <location>
        <begin position="1"/>
        <end position="18"/>
    </location>
</feature>
<feature type="compositionally biased region" description="Basic and acidic residues" evidence="4">
    <location>
        <begin position="25"/>
        <end position="36"/>
    </location>
</feature>
<feature type="compositionally biased region" description="Basic and acidic residues" evidence="4">
    <location>
        <begin position="94"/>
        <end position="112"/>
    </location>
</feature>
<feature type="compositionally biased region" description="Basic and acidic residues" evidence="4">
    <location>
        <begin position="129"/>
        <end position="144"/>
    </location>
</feature>
<feature type="compositionally biased region" description="Gly residues" evidence="4">
    <location>
        <begin position="158"/>
        <end position="167"/>
    </location>
</feature>
<feature type="compositionally biased region" description="Basic and acidic residues" evidence="4">
    <location>
        <begin position="179"/>
        <end position="195"/>
    </location>
</feature>
<feature type="modified residue" description="Phosphoserine; by host" evidence="1">
    <location>
        <position position="2"/>
    </location>
</feature>
<feature type="modified residue" description="Omega-N-methylated arginine; by host" evidence="1">
    <location>
        <position position="13"/>
    </location>
</feature>
<feature type="modified residue" description="N6-acetyllysine; by host" evidence="1">
    <location>
        <position position="72"/>
    </location>
</feature>
<feature type="modified residue" description="Phosphoserine; by host" evidence="1">
    <location>
        <position position="123"/>
    </location>
</feature>
<feature type="modified residue" description="Phosphoserine; by host" evidence="1">
    <location>
        <position position="177"/>
    </location>
</feature>
<sequence>MSRSESKESRKGREESLEKWVNSRKKVEELERELRKEKKKIKRLEDQNPWLGNIKGILGKKDKDGEGAPPAKRARTDQMEVDSGPRKRPLRGGFTDKERQDHRRRKALENKKKQLAGGGKNLSREEEEELKRLTEEDERRERRVAGPPTGGVNPLEGGQRGAPGGGFVPSMQGVPESPFSRHGEGLDTRGDRGFP</sequence>
<protein>
    <recommendedName>
        <fullName>Small delta antigen</fullName>
        <shortName>S-HDAg</shortName>
    </recommendedName>
    <alternativeName>
        <fullName>p24</fullName>
    </alternativeName>
</protein>
<keyword id="KW-0007">Acetylation</keyword>
<keyword id="KW-1048">Host nucleus</keyword>
<keyword id="KW-0945">Host-virus interaction</keyword>
<keyword id="KW-0488">Methylation</keyword>
<keyword id="KW-0597">Phosphoprotein</keyword>
<keyword id="KW-0694">RNA-binding</keyword>
<keyword id="KW-1163">Viral penetration into host nucleus</keyword>
<keyword id="KW-0946">Virion</keyword>
<keyword id="KW-1160">Virus entry into host cell</keyword>
<comment type="function">
    <text evidence="1">Promotes both transcription and replication of genomic RNA. Following virus entry into host cell, provides nuclear import of HDV RNPs thanks to its nuclear localization signal. May interact with host RNA polymerase II thereby changing its template requirement from DNA to RNA. RNA pol II complex would then acts as an RNA-directed RNA polymerase, and transcribe and replicate HDV genome.</text>
</comment>
<comment type="subunit">
    <text evidence="1">Homodimer. Homooctamer. Interacts with host RNA polymerase II complex, and with host NPM1.</text>
</comment>
<comment type="subcellular location">
    <subcellularLocation>
        <location evidence="1">Virion</location>
    </subcellularLocation>
    <subcellularLocation>
        <location evidence="1">Host nucleus</location>
    </subcellularLocation>
</comment>
<comment type="PTM">
    <text evidence="1">Phosphorylated at serines and threonines by host MAPK1/3, PKR, and CK2.</text>
</comment>
<comment type="PTM">
    <text evidence="1">Acetylation modulates nuclear localization. Neo-synthesized genomic RNA migrates from the nucleus to the cytoplasm, where they interact with S-HDAg, which once acetylated redirect both partners to the nucleus.</text>
</comment>
<comment type="PTM">
    <text evidence="1">Methylation plays a role in viral genome replication.</text>
</comment>
<comment type="RNA editing">
    <location>
        <position position="196" evidence="1"/>
    </location>
    <text evidence="1">Partially edited. RNA editing at this position occurs on the antigenomic strand and consists of a conversion of A to G catalyzed by the cellular enzyme ADAR1. The unedited RNA version gives rise to the small delta antigen, which ends with a nonsense codon at position 196. In the edited version, this amber codon is modified to a tryptophan codon and gives rise to the large delta antigen protein (AC P29996). S-HDAg suppresses editing of non-replicating antigenomic RNA, thereby regulating the extent of editing.</text>
</comment>
<comment type="miscellaneous">
    <text evidence="1">This strain belongs to the genotype I found in North America, Europe, Africa, East and West Asia and the South Pacific.</text>
</comment>
<comment type="similarity">
    <text evidence="5">Belongs to the hepatitis delta antigen family.</text>
</comment>